<proteinExistence type="evidence at transcript level"/>
<protein>
    <recommendedName>
        <fullName>Probable glutamyl endopeptidase, chloroplastic</fullName>
        <ecNumber>3.4.21.-</ecNumber>
    </recommendedName>
</protein>
<gene>
    <name type="primary">GEP</name>
    <name type="ordered locus">Os03g0307100</name>
    <name type="ordered locus">LOC_Os03g19410</name>
    <name type="ORF">OsJ_10563</name>
</gene>
<name>CGEP_ORYSJ</name>
<organism>
    <name type="scientific">Oryza sativa subsp. japonica</name>
    <name type="common">Rice</name>
    <dbReference type="NCBI Taxonomy" id="39947"/>
    <lineage>
        <taxon>Eukaryota</taxon>
        <taxon>Viridiplantae</taxon>
        <taxon>Streptophyta</taxon>
        <taxon>Embryophyta</taxon>
        <taxon>Tracheophyta</taxon>
        <taxon>Spermatophyta</taxon>
        <taxon>Magnoliopsida</taxon>
        <taxon>Liliopsida</taxon>
        <taxon>Poales</taxon>
        <taxon>Poaceae</taxon>
        <taxon>BOP clade</taxon>
        <taxon>Oryzoideae</taxon>
        <taxon>Oryzeae</taxon>
        <taxon>Oryzinae</taxon>
        <taxon>Oryza</taxon>
        <taxon>Oryza sativa</taxon>
    </lineage>
</organism>
<sequence>MSSLTILLQRACLRFALLPVPPLRAPLRPPRRPLGLPRRSAMSSSAASRLSHIVAAAGGAAGESSEPPAAAAAASGLAQEDDDLSSAMMGYRLPPKEIQDIVDAPPLPVLSFSPSKDKILFLKRRALPPLSDLAKPEEKLAGVRIDGYSNTRSRMSFYTGIGIHKLMDDGTLGPEKVVHGYPEGARINFVTWSQDGRHLSFSVRVDEEDNTSGKLRLWIADVESGEARPLFKSPEIYLNAIFDSFVWVNNSTLLVCTIPLSRGAPPQKPSVPSGPKIQSNETSNVVQVRTFQDLLKDEYDADLFDYYATSQLVLASFDGTVKPIGPPAVYTSIDPSPDDKYLMISSIHRPYSYIVPCGRFPKKVELWTVDGEFIRELCDLPLAEDIPIATSSVRKGKRSIYWRPDKPAMLYWVETQDGGDAKVEVSPRDIVYMENAEPINGEQPEILHKLDLRYAGTSWCDESLALVYESWYKTRKTRTWVISPDKKDVSPRILFDRSSEDVYSDPGSPMLRRTAMGTYVIAKVKKQDENTYILLNGMGATPEGNVPFLDLFDINTGSKERIWQSDKEKYYETVVALMSDKTDGELPLEKLKILTSKESKTENTQYYLQIWPEKKQVQITDFPHPYPQLASLYKEMIRYQRKDGVQLTATLYLPPGYDPSQDGPLPCLVWSYPGEFKSKDAAGQVRGSPNEFPGIGATSPLLWLARGFAILSGPTIPIIGEGDEEANDRYVEQLVTSAEAAAEEVVRRGVAHPDKIAVGGHSYGAFMTANLLAHAPHLFCCGIARSGAYNRTLTPFGFQNEDRTLWEATNTYVEMSPFMSANKIKKPILLIHGEQDNNSGTLTMQSDRFFNALKGHGALSRLVILPFESHGYSARESIMHVLWETDRWLQKYCLSGSSKTDSDSVADTENKTVSASGGGAPCEGPEAEGFSSMQRSLL</sequence>
<feature type="transit peptide" description="Chloroplast" evidence="2">
    <location>
        <begin position="1"/>
        <end position="54"/>
    </location>
</feature>
<feature type="chain" id="PRO_0000397885" description="Probable glutamyl endopeptidase, chloroplastic">
    <location>
        <begin position="55"/>
        <end position="938"/>
    </location>
</feature>
<feature type="region of interest" description="Disordered" evidence="3">
    <location>
        <begin position="58"/>
        <end position="77"/>
    </location>
</feature>
<feature type="region of interest" description="Disordered" evidence="3">
    <location>
        <begin position="897"/>
        <end position="938"/>
    </location>
</feature>
<feature type="compositionally biased region" description="Low complexity" evidence="3">
    <location>
        <begin position="58"/>
        <end position="76"/>
    </location>
</feature>
<feature type="compositionally biased region" description="Polar residues" evidence="3">
    <location>
        <begin position="897"/>
        <end position="913"/>
    </location>
</feature>
<feature type="active site" description="Charge relay system" evidence="1">
    <location>
        <position position="762"/>
    </location>
</feature>
<feature type="active site" description="Charge relay system" evidence="1">
    <location>
        <position position="836"/>
    </location>
</feature>
<feature type="active site" description="Charge relay system" evidence="1">
    <location>
        <position position="870"/>
    </location>
</feature>
<dbReference type="EC" id="3.4.21.-"/>
<dbReference type="EMBL" id="DP000009">
    <property type="protein sequence ID" value="ABF95536.1"/>
    <property type="molecule type" value="Genomic_DNA"/>
</dbReference>
<dbReference type="EMBL" id="AP008209">
    <property type="protein sequence ID" value="BAF11807.1"/>
    <property type="molecule type" value="Genomic_DNA"/>
</dbReference>
<dbReference type="EMBL" id="AP014959">
    <property type="protein sequence ID" value="BAS83820.1"/>
    <property type="molecule type" value="Genomic_DNA"/>
</dbReference>
<dbReference type="EMBL" id="CM000140">
    <property type="protein sequence ID" value="EEE58916.1"/>
    <property type="status" value="ALT_SEQ"/>
    <property type="molecule type" value="Genomic_DNA"/>
</dbReference>
<dbReference type="EMBL" id="AK102205">
    <property type="status" value="NOT_ANNOTATED_CDS"/>
    <property type="molecule type" value="mRNA"/>
</dbReference>
<dbReference type="RefSeq" id="XP_015630627.1">
    <property type="nucleotide sequence ID" value="XM_015775141.1"/>
</dbReference>
<dbReference type="BioGRID" id="801643">
    <property type="interactions" value="1"/>
</dbReference>
<dbReference type="FunCoup" id="Q10MJ1">
    <property type="interactions" value="434"/>
</dbReference>
<dbReference type="STRING" id="39947.Q10MJ1"/>
<dbReference type="ESTHER" id="orysj-cgep">
    <property type="family name" value="Glutamyl_Peptidase_S9"/>
</dbReference>
<dbReference type="MEROPS" id="S09.021"/>
<dbReference type="PaxDb" id="39947-Q10MJ1"/>
<dbReference type="EnsemblPlants" id="Os03t0307100-01">
    <property type="protein sequence ID" value="Os03t0307100-01"/>
    <property type="gene ID" value="Os03g0307100"/>
</dbReference>
<dbReference type="Gramene" id="Os03t0307100-01">
    <property type="protein sequence ID" value="Os03t0307100-01"/>
    <property type="gene ID" value="Os03g0307100"/>
</dbReference>
<dbReference type="KEGG" id="dosa:Os03g0307100"/>
<dbReference type="eggNOG" id="KOG2100">
    <property type="taxonomic scope" value="Eukaryota"/>
</dbReference>
<dbReference type="HOGENOM" id="CLU_017120_0_0_1"/>
<dbReference type="InParanoid" id="Q10MJ1"/>
<dbReference type="OMA" id="WAYPREY"/>
<dbReference type="OrthoDB" id="43744at2759"/>
<dbReference type="Proteomes" id="UP000000763">
    <property type="component" value="Chromosome 3"/>
</dbReference>
<dbReference type="Proteomes" id="UP000007752">
    <property type="component" value="Chromosome 3"/>
</dbReference>
<dbReference type="Proteomes" id="UP000059680">
    <property type="component" value="Chromosome 3"/>
</dbReference>
<dbReference type="GO" id="GO:0009570">
    <property type="term" value="C:chloroplast stroma"/>
    <property type="evidence" value="ECO:0007669"/>
    <property type="project" value="UniProtKB-SubCell"/>
</dbReference>
<dbReference type="GO" id="GO:0004252">
    <property type="term" value="F:serine-type endopeptidase activity"/>
    <property type="evidence" value="ECO:0000318"/>
    <property type="project" value="GO_Central"/>
</dbReference>
<dbReference type="GO" id="GO:0006508">
    <property type="term" value="P:proteolysis"/>
    <property type="evidence" value="ECO:0007669"/>
    <property type="project" value="UniProtKB-KW"/>
</dbReference>
<dbReference type="FunFam" id="3.40.50.1820:FF:000049">
    <property type="entry name" value="probable glutamyl endopeptidase, chloroplastic"/>
    <property type="match status" value="1"/>
</dbReference>
<dbReference type="Gene3D" id="3.40.50.1820">
    <property type="entry name" value="alpha/beta hydrolase"/>
    <property type="match status" value="1"/>
</dbReference>
<dbReference type="InterPro" id="IPR029058">
    <property type="entry name" value="AB_hydrolase_fold"/>
</dbReference>
<dbReference type="InterPro" id="IPR001375">
    <property type="entry name" value="Peptidase_S9_cat"/>
</dbReference>
<dbReference type="PANTHER" id="PTHR42776:SF28">
    <property type="entry name" value="GLUTAMYL ENDOPEPTIDASE, CHLOROPLASTIC-RELATED"/>
    <property type="match status" value="1"/>
</dbReference>
<dbReference type="PANTHER" id="PTHR42776">
    <property type="entry name" value="SERINE PEPTIDASE S9 FAMILY MEMBER"/>
    <property type="match status" value="1"/>
</dbReference>
<dbReference type="Pfam" id="PF00326">
    <property type="entry name" value="Peptidase_S9"/>
    <property type="match status" value="1"/>
</dbReference>
<dbReference type="SUPFAM" id="SSF53474">
    <property type="entry name" value="alpha/beta-Hydrolases"/>
    <property type="match status" value="1"/>
</dbReference>
<dbReference type="SUPFAM" id="SSF82171">
    <property type="entry name" value="DPP6 N-terminal domain-like"/>
    <property type="match status" value="1"/>
</dbReference>
<comment type="function">
    <text evidence="1">Serine-type protease active in vitro against the LHCII N-terminal. Cleaves its substrate on the carboxy-side of Glu residues (By similarity).</text>
</comment>
<comment type="subcellular location">
    <subcellularLocation>
        <location evidence="1">Plastid</location>
        <location evidence="1">Chloroplast stroma</location>
    </subcellularLocation>
</comment>
<comment type="similarity">
    <text evidence="4">Belongs to the peptidase S9D family.</text>
</comment>
<comment type="sequence caution" evidence="4">
    <conflict type="frameshift">
        <sequence resource="EMBL" id="AK102205"/>
    </conflict>
</comment>
<comment type="sequence caution" evidence="4">
    <conflict type="erroneous gene model prediction">
        <sequence resource="EMBL-CDS" id="EEE58916"/>
    </conflict>
</comment>
<reference key="1">
    <citation type="journal article" date="2005" name="Genome Res.">
        <title>Sequence, annotation, and analysis of synteny between rice chromosome 3 and diverged grass species.</title>
        <authorList>
            <consortium name="The rice chromosome 3 sequencing consortium"/>
            <person name="Buell C.R."/>
            <person name="Yuan Q."/>
            <person name="Ouyang S."/>
            <person name="Liu J."/>
            <person name="Zhu W."/>
            <person name="Wang A."/>
            <person name="Maiti R."/>
            <person name="Haas B."/>
            <person name="Wortman J."/>
            <person name="Pertea M."/>
            <person name="Jones K.M."/>
            <person name="Kim M."/>
            <person name="Overton L."/>
            <person name="Tsitrin T."/>
            <person name="Fadrosh D."/>
            <person name="Bera J."/>
            <person name="Weaver B."/>
            <person name="Jin S."/>
            <person name="Johri S."/>
            <person name="Reardon M."/>
            <person name="Webb K."/>
            <person name="Hill J."/>
            <person name="Moffat K."/>
            <person name="Tallon L."/>
            <person name="Van Aken S."/>
            <person name="Lewis M."/>
            <person name="Utterback T."/>
            <person name="Feldblyum T."/>
            <person name="Zismann V."/>
            <person name="Iobst S."/>
            <person name="Hsiao J."/>
            <person name="de Vazeille A.R."/>
            <person name="Salzberg S.L."/>
            <person name="White O."/>
            <person name="Fraser C.M."/>
            <person name="Yu Y."/>
            <person name="Kim H."/>
            <person name="Rambo T."/>
            <person name="Currie J."/>
            <person name="Collura K."/>
            <person name="Kernodle-Thompson S."/>
            <person name="Wei F."/>
            <person name="Kudrna K."/>
            <person name="Ammiraju J.S.S."/>
            <person name="Luo M."/>
            <person name="Goicoechea J.L."/>
            <person name="Wing R.A."/>
            <person name="Henry D."/>
            <person name="Oates R."/>
            <person name="Palmer M."/>
            <person name="Pries G."/>
            <person name="Saski C."/>
            <person name="Simmons J."/>
            <person name="Soderlund C."/>
            <person name="Nelson W."/>
            <person name="de la Bastide M."/>
            <person name="Spiegel L."/>
            <person name="Nascimento L."/>
            <person name="Huang E."/>
            <person name="Preston R."/>
            <person name="Zutavern T."/>
            <person name="Palmer L."/>
            <person name="O'Shaughnessy A."/>
            <person name="Dike S."/>
            <person name="McCombie W.R."/>
            <person name="Minx P."/>
            <person name="Cordum H."/>
            <person name="Wilson R."/>
            <person name="Jin W."/>
            <person name="Lee H.R."/>
            <person name="Jiang J."/>
            <person name="Jackson S."/>
        </authorList>
    </citation>
    <scope>NUCLEOTIDE SEQUENCE [LARGE SCALE GENOMIC DNA]</scope>
    <source>
        <strain>cv. Nipponbare</strain>
    </source>
</reference>
<reference key="2">
    <citation type="journal article" date="2005" name="Nature">
        <title>The map-based sequence of the rice genome.</title>
        <authorList>
            <consortium name="International rice genome sequencing project (IRGSP)"/>
        </authorList>
    </citation>
    <scope>NUCLEOTIDE SEQUENCE [LARGE SCALE GENOMIC DNA]</scope>
    <source>
        <strain>cv. Nipponbare</strain>
    </source>
</reference>
<reference key="3">
    <citation type="journal article" date="2008" name="Nucleic Acids Res.">
        <title>The rice annotation project database (RAP-DB): 2008 update.</title>
        <authorList>
            <consortium name="The rice annotation project (RAP)"/>
        </authorList>
    </citation>
    <scope>GENOME REANNOTATION</scope>
    <source>
        <strain>cv. Nipponbare</strain>
    </source>
</reference>
<reference key="4">
    <citation type="journal article" date="2013" name="Rice">
        <title>Improvement of the Oryza sativa Nipponbare reference genome using next generation sequence and optical map data.</title>
        <authorList>
            <person name="Kawahara Y."/>
            <person name="de la Bastide M."/>
            <person name="Hamilton J.P."/>
            <person name="Kanamori H."/>
            <person name="McCombie W.R."/>
            <person name="Ouyang S."/>
            <person name="Schwartz D.C."/>
            <person name="Tanaka T."/>
            <person name="Wu J."/>
            <person name="Zhou S."/>
            <person name="Childs K.L."/>
            <person name="Davidson R.M."/>
            <person name="Lin H."/>
            <person name="Quesada-Ocampo L."/>
            <person name="Vaillancourt B."/>
            <person name="Sakai H."/>
            <person name="Lee S.S."/>
            <person name="Kim J."/>
            <person name="Numa H."/>
            <person name="Itoh T."/>
            <person name="Buell C.R."/>
            <person name="Matsumoto T."/>
        </authorList>
    </citation>
    <scope>GENOME REANNOTATION</scope>
    <source>
        <strain>cv. Nipponbare</strain>
    </source>
</reference>
<reference key="5">
    <citation type="journal article" date="2005" name="PLoS Biol.">
        <title>The genomes of Oryza sativa: a history of duplications.</title>
        <authorList>
            <person name="Yu J."/>
            <person name="Wang J."/>
            <person name="Lin W."/>
            <person name="Li S."/>
            <person name="Li H."/>
            <person name="Zhou J."/>
            <person name="Ni P."/>
            <person name="Dong W."/>
            <person name="Hu S."/>
            <person name="Zeng C."/>
            <person name="Zhang J."/>
            <person name="Zhang Y."/>
            <person name="Li R."/>
            <person name="Xu Z."/>
            <person name="Li S."/>
            <person name="Li X."/>
            <person name="Zheng H."/>
            <person name="Cong L."/>
            <person name="Lin L."/>
            <person name="Yin J."/>
            <person name="Geng J."/>
            <person name="Li G."/>
            <person name="Shi J."/>
            <person name="Liu J."/>
            <person name="Lv H."/>
            <person name="Li J."/>
            <person name="Wang J."/>
            <person name="Deng Y."/>
            <person name="Ran L."/>
            <person name="Shi X."/>
            <person name="Wang X."/>
            <person name="Wu Q."/>
            <person name="Li C."/>
            <person name="Ren X."/>
            <person name="Wang J."/>
            <person name="Wang X."/>
            <person name="Li D."/>
            <person name="Liu D."/>
            <person name="Zhang X."/>
            <person name="Ji Z."/>
            <person name="Zhao W."/>
            <person name="Sun Y."/>
            <person name="Zhang Z."/>
            <person name="Bao J."/>
            <person name="Han Y."/>
            <person name="Dong L."/>
            <person name="Ji J."/>
            <person name="Chen P."/>
            <person name="Wu S."/>
            <person name="Liu J."/>
            <person name="Xiao Y."/>
            <person name="Bu D."/>
            <person name="Tan J."/>
            <person name="Yang L."/>
            <person name="Ye C."/>
            <person name="Zhang J."/>
            <person name="Xu J."/>
            <person name="Zhou Y."/>
            <person name="Yu Y."/>
            <person name="Zhang B."/>
            <person name="Zhuang S."/>
            <person name="Wei H."/>
            <person name="Liu B."/>
            <person name="Lei M."/>
            <person name="Yu H."/>
            <person name="Li Y."/>
            <person name="Xu H."/>
            <person name="Wei S."/>
            <person name="He X."/>
            <person name="Fang L."/>
            <person name="Zhang Z."/>
            <person name="Zhang Y."/>
            <person name="Huang X."/>
            <person name="Su Z."/>
            <person name="Tong W."/>
            <person name="Li J."/>
            <person name="Tong Z."/>
            <person name="Li S."/>
            <person name="Ye J."/>
            <person name="Wang L."/>
            <person name="Fang L."/>
            <person name="Lei T."/>
            <person name="Chen C.-S."/>
            <person name="Chen H.-C."/>
            <person name="Xu Z."/>
            <person name="Li H."/>
            <person name="Huang H."/>
            <person name="Zhang F."/>
            <person name="Xu H."/>
            <person name="Li N."/>
            <person name="Zhao C."/>
            <person name="Li S."/>
            <person name="Dong L."/>
            <person name="Huang Y."/>
            <person name="Li L."/>
            <person name="Xi Y."/>
            <person name="Qi Q."/>
            <person name="Li W."/>
            <person name="Zhang B."/>
            <person name="Hu W."/>
            <person name="Zhang Y."/>
            <person name="Tian X."/>
            <person name="Jiao Y."/>
            <person name="Liang X."/>
            <person name="Jin J."/>
            <person name="Gao L."/>
            <person name="Zheng W."/>
            <person name="Hao B."/>
            <person name="Liu S.-M."/>
            <person name="Wang W."/>
            <person name="Yuan L."/>
            <person name="Cao M."/>
            <person name="McDermott J."/>
            <person name="Samudrala R."/>
            <person name="Wang J."/>
            <person name="Wong G.K.-S."/>
            <person name="Yang H."/>
        </authorList>
    </citation>
    <scope>NUCLEOTIDE SEQUENCE [LARGE SCALE GENOMIC DNA]</scope>
    <source>
        <strain>cv. Nipponbare</strain>
    </source>
</reference>
<reference key="6">
    <citation type="journal article" date="2003" name="Science">
        <title>Collection, mapping, and annotation of over 28,000 cDNA clones from japonica rice.</title>
        <authorList>
            <consortium name="The rice full-length cDNA consortium"/>
        </authorList>
    </citation>
    <scope>NUCLEOTIDE SEQUENCE [LARGE SCALE MRNA]</scope>
    <source>
        <strain>cv. Nipponbare</strain>
    </source>
</reference>
<evidence type="ECO:0000250" key="1"/>
<evidence type="ECO:0000255" key="2"/>
<evidence type="ECO:0000256" key="3">
    <source>
        <dbReference type="SAM" id="MobiDB-lite"/>
    </source>
</evidence>
<evidence type="ECO:0000305" key="4"/>
<accession>Q10MJ1</accession>
<accession>A0A0P0VWI9</accession>
<accession>B9F7Y1</accession>
<keyword id="KW-0150">Chloroplast</keyword>
<keyword id="KW-0378">Hydrolase</keyword>
<keyword id="KW-0934">Plastid</keyword>
<keyword id="KW-0645">Protease</keyword>
<keyword id="KW-1185">Reference proteome</keyword>
<keyword id="KW-0720">Serine protease</keyword>
<keyword id="KW-0809">Transit peptide</keyword>